<evidence type="ECO:0000250" key="1"/>
<evidence type="ECO:0000255" key="2"/>
<evidence type="ECO:0000305" key="3"/>
<proteinExistence type="inferred from homology"/>
<keyword id="KW-0472">Membrane</keyword>
<keyword id="KW-0496">Mitochondrion</keyword>
<keyword id="KW-0999">Mitochondrion inner membrane</keyword>
<keyword id="KW-1185">Reference proteome</keyword>
<keyword id="KW-0812">Transmembrane</keyword>
<keyword id="KW-1133">Transmembrane helix</keyword>
<feature type="chain" id="PRO_0000221639" description="MICOS complex subunit mic10">
    <location>
        <begin position="1"/>
        <end position="86"/>
    </location>
</feature>
<feature type="transmembrane region" description="Helical" evidence="2">
    <location>
        <begin position="22"/>
        <end position="41"/>
    </location>
</feature>
<feature type="topological domain" description="Mitochondrial intermembrane" evidence="2">
    <location>
        <begin position="42"/>
        <end position="86"/>
    </location>
</feature>
<gene>
    <name type="primary">mic10</name>
    <name type="ORF">SPAPJ691.03</name>
</gene>
<organism>
    <name type="scientific">Schizosaccharomyces pombe (strain 972 / ATCC 24843)</name>
    <name type="common">Fission yeast</name>
    <dbReference type="NCBI Taxonomy" id="284812"/>
    <lineage>
        <taxon>Eukaryota</taxon>
        <taxon>Fungi</taxon>
        <taxon>Dikarya</taxon>
        <taxon>Ascomycota</taxon>
        <taxon>Taphrinomycotina</taxon>
        <taxon>Schizosaccharomycetes</taxon>
        <taxon>Schizosaccharomycetales</taxon>
        <taxon>Schizosaccharomycetaceae</taxon>
        <taxon>Schizosaccharomyces</taxon>
    </lineage>
</organism>
<name>MIC10_SCHPO</name>
<reference key="1">
    <citation type="journal article" date="2002" name="Nature">
        <title>The genome sequence of Schizosaccharomyces pombe.</title>
        <authorList>
            <person name="Wood V."/>
            <person name="Gwilliam R."/>
            <person name="Rajandream M.A."/>
            <person name="Lyne M.H."/>
            <person name="Lyne R."/>
            <person name="Stewart A."/>
            <person name="Sgouros J.G."/>
            <person name="Peat N."/>
            <person name="Hayles J."/>
            <person name="Baker S.G."/>
            <person name="Basham D."/>
            <person name="Bowman S."/>
            <person name="Brooks K."/>
            <person name="Brown D."/>
            <person name="Brown S."/>
            <person name="Chillingworth T."/>
            <person name="Churcher C.M."/>
            <person name="Collins M."/>
            <person name="Connor R."/>
            <person name="Cronin A."/>
            <person name="Davis P."/>
            <person name="Feltwell T."/>
            <person name="Fraser A."/>
            <person name="Gentles S."/>
            <person name="Goble A."/>
            <person name="Hamlin N."/>
            <person name="Harris D.E."/>
            <person name="Hidalgo J."/>
            <person name="Hodgson G."/>
            <person name="Holroyd S."/>
            <person name="Hornsby T."/>
            <person name="Howarth S."/>
            <person name="Huckle E.J."/>
            <person name="Hunt S."/>
            <person name="Jagels K."/>
            <person name="James K.D."/>
            <person name="Jones L."/>
            <person name="Jones M."/>
            <person name="Leather S."/>
            <person name="McDonald S."/>
            <person name="McLean J."/>
            <person name="Mooney P."/>
            <person name="Moule S."/>
            <person name="Mungall K.L."/>
            <person name="Murphy L.D."/>
            <person name="Niblett D."/>
            <person name="Odell C."/>
            <person name="Oliver K."/>
            <person name="O'Neil S."/>
            <person name="Pearson D."/>
            <person name="Quail M.A."/>
            <person name="Rabbinowitsch E."/>
            <person name="Rutherford K.M."/>
            <person name="Rutter S."/>
            <person name="Saunders D."/>
            <person name="Seeger K."/>
            <person name="Sharp S."/>
            <person name="Skelton J."/>
            <person name="Simmonds M.N."/>
            <person name="Squares R."/>
            <person name="Squares S."/>
            <person name="Stevens K."/>
            <person name="Taylor K."/>
            <person name="Taylor R.G."/>
            <person name="Tivey A."/>
            <person name="Walsh S.V."/>
            <person name="Warren T."/>
            <person name="Whitehead S."/>
            <person name="Woodward J.R."/>
            <person name="Volckaert G."/>
            <person name="Aert R."/>
            <person name="Robben J."/>
            <person name="Grymonprez B."/>
            <person name="Weltjens I."/>
            <person name="Vanstreels E."/>
            <person name="Rieger M."/>
            <person name="Schaefer M."/>
            <person name="Mueller-Auer S."/>
            <person name="Gabel C."/>
            <person name="Fuchs M."/>
            <person name="Duesterhoeft A."/>
            <person name="Fritzc C."/>
            <person name="Holzer E."/>
            <person name="Moestl D."/>
            <person name="Hilbert H."/>
            <person name="Borzym K."/>
            <person name="Langer I."/>
            <person name="Beck A."/>
            <person name="Lehrach H."/>
            <person name="Reinhardt R."/>
            <person name="Pohl T.M."/>
            <person name="Eger P."/>
            <person name="Zimmermann W."/>
            <person name="Wedler H."/>
            <person name="Wambutt R."/>
            <person name="Purnelle B."/>
            <person name="Goffeau A."/>
            <person name="Cadieu E."/>
            <person name="Dreano S."/>
            <person name="Gloux S."/>
            <person name="Lelaure V."/>
            <person name="Mottier S."/>
            <person name="Galibert F."/>
            <person name="Aves S.J."/>
            <person name="Xiang Z."/>
            <person name="Hunt C."/>
            <person name="Moore K."/>
            <person name="Hurst S.M."/>
            <person name="Lucas M."/>
            <person name="Rochet M."/>
            <person name="Gaillardin C."/>
            <person name="Tallada V.A."/>
            <person name="Garzon A."/>
            <person name="Thode G."/>
            <person name="Daga R.R."/>
            <person name="Cruzado L."/>
            <person name="Jimenez J."/>
            <person name="Sanchez M."/>
            <person name="del Rey F."/>
            <person name="Benito J."/>
            <person name="Dominguez A."/>
            <person name="Revuelta J.L."/>
            <person name="Moreno S."/>
            <person name="Armstrong J."/>
            <person name="Forsburg S.L."/>
            <person name="Cerutti L."/>
            <person name="Lowe T."/>
            <person name="McCombie W.R."/>
            <person name="Paulsen I."/>
            <person name="Potashkin J."/>
            <person name="Shpakovski G.V."/>
            <person name="Ussery D."/>
            <person name="Barrell B.G."/>
            <person name="Nurse P."/>
        </authorList>
    </citation>
    <scope>NUCLEOTIDE SEQUENCE [LARGE SCALE GENOMIC DNA]</scope>
    <source>
        <strain>972 / ATCC 24843</strain>
    </source>
</reference>
<comment type="function">
    <text evidence="1">Component of the MICOS complex, a large protein complex of the mitochondrial inner membrane that plays crucial roles in the maintenance of crista junctions, inner membrane architecture, and formation of contact sites to the outer membrane.</text>
</comment>
<comment type="subunit">
    <text evidence="1">Component of the mitochondrial contact site and cristae organizing system (MICOS) complex.</text>
</comment>
<comment type="subcellular location">
    <subcellularLocation>
        <location evidence="1">Mitochondrion inner membrane</location>
        <topology evidence="1">Single-pass membrane protein</topology>
    </subcellularLocation>
    <text evidence="1">The C-terminus is located in the intermembrane space, while the location of the N-terminus is has not been determined yet. As some programs predict the presence of 2 closely apposed membrane domains, it has been proposed that the protein may cross the membrane twice and that both termini may face the intermembrane space (By similarity).</text>
</comment>
<comment type="similarity">
    <text evidence="3">Belongs to the MICOS complex subunit Mic10 family.</text>
</comment>
<sequence length="86" mass="9309">MSTSQSSEQTLNYQWDVCLSNMVVQSGIGLGAGIVSSVLFFRRAAWPVWGGLGFGLGKSYADSNARLRTFHAIPKQLPASSTQKKD</sequence>
<accession>Q9HFF0</accession>
<protein>
    <recommendedName>
        <fullName>MICOS complex subunit mic10</fullName>
    </recommendedName>
    <alternativeName>
        <fullName>Mitochondrial inner membrane organizing system protein PJ691.03</fullName>
    </alternativeName>
</protein>
<dbReference type="EMBL" id="CU329670">
    <property type="protein sequence ID" value="CAC14019.1"/>
    <property type="molecule type" value="Genomic_DNA"/>
</dbReference>
<dbReference type="RefSeq" id="NP_594896.1">
    <property type="nucleotide sequence ID" value="NM_001020325.2"/>
</dbReference>
<dbReference type="BioGRID" id="279737">
    <property type="interactions" value="16"/>
</dbReference>
<dbReference type="FunCoup" id="Q9HFF0">
    <property type="interactions" value="211"/>
</dbReference>
<dbReference type="STRING" id="284812.Q9HFF0"/>
<dbReference type="PaxDb" id="4896-SPAPJ691.03.1"/>
<dbReference type="EnsemblFungi" id="SPAPJ691.03.1">
    <property type="protein sequence ID" value="SPAPJ691.03.1:pep"/>
    <property type="gene ID" value="SPAPJ691.03"/>
</dbReference>
<dbReference type="GeneID" id="2543313"/>
<dbReference type="KEGG" id="spo:2543313"/>
<dbReference type="PomBase" id="SPAPJ691.03">
    <property type="gene designation" value="mic10"/>
</dbReference>
<dbReference type="VEuPathDB" id="FungiDB:SPAPJ691.03"/>
<dbReference type="eggNOG" id="KOG4604">
    <property type="taxonomic scope" value="Eukaryota"/>
</dbReference>
<dbReference type="HOGENOM" id="CLU_068905_2_0_1"/>
<dbReference type="InParanoid" id="Q9HFF0"/>
<dbReference type="OMA" id="SNCRHDL"/>
<dbReference type="PhylomeDB" id="Q9HFF0"/>
<dbReference type="PRO" id="PR:Q9HFF0"/>
<dbReference type="Proteomes" id="UP000002485">
    <property type="component" value="Chromosome I"/>
</dbReference>
<dbReference type="GO" id="GO:0061617">
    <property type="term" value="C:MICOS complex"/>
    <property type="evidence" value="ECO:0000269"/>
    <property type="project" value="PomBase"/>
</dbReference>
<dbReference type="GO" id="GO:0044284">
    <property type="term" value="C:mitochondrial crista junction"/>
    <property type="evidence" value="ECO:0000266"/>
    <property type="project" value="PomBase"/>
</dbReference>
<dbReference type="GO" id="GO:0005739">
    <property type="term" value="C:mitochondrion"/>
    <property type="evidence" value="ECO:0000318"/>
    <property type="project" value="GO_Central"/>
</dbReference>
<dbReference type="GO" id="GO:0042407">
    <property type="term" value="P:cristae formation"/>
    <property type="evidence" value="ECO:0000315"/>
    <property type="project" value="PomBase"/>
</dbReference>
<dbReference type="InterPro" id="IPR007512">
    <property type="entry name" value="Mic10"/>
</dbReference>
<dbReference type="PANTHER" id="PTHR21304">
    <property type="entry name" value="MICOS COMPLEX SUBUNIT MIC10"/>
    <property type="match status" value="1"/>
</dbReference>
<dbReference type="PANTHER" id="PTHR21304:SF0">
    <property type="entry name" value="MICOS COMPLEX SUBUNIT MIC10"/>
    <property type="match status" value="1"/>
</dbReference>
<dbReference type="Pfam" id="PF04418">
    <property type="entry name" value="DUF543"/>
    <property type="match status" value="1"/>
</dbReference>